<reference key="1">
    <citation type="submission" date="2006-08" db="EMBL/GenBank/DDBJ databases">
        <title>Complete sequence of Shewanella frigidimarina NCIMB 400.</title>
        <authorList>
            <consortium name="US DOE Joint Genome Institute"/>
            <person name="Copeland A."/>
            <person name="Lucas S."/>
            <person name="Lapidus A."/>
            <person name="Barry K."/>
            <person name="Detter J.C."/>
            <person name="Glavina del Rio T."/>
            <person name="Hammon N."/>
            <person name="Israni S."/>
            <person name="Dalin E."/>
            <person name="Tice H."/>
            <person name="Pitluck S."/>
            <person name="Fredrickson J.K."/>
            <person name="Kolker E."/>
            <person name="McCuel L.A."/>
            <person name="DiChristina T."/>
            <person name="Nealson K.H."/>
            <person name="Newman D."/>
            <person name="Tiedje J.M."/>
            <person name="Zhou J."/>
            <person name="Romine M.F."/>
            <person name="Culley D.E."/>
            <person name="Serres M."/>
            <person name="Chertkov O."/>
            <person name="Brettin T."/>
            <person name="Bruce D."/>
            <person name="Han C."/>
            <person name="Tapia R."/>
            <person name="Gilna P."/>
            <person name="Schmutz J."/>
            <person name="Larimer F."/>
            <person name="Land M."/>
            <person name="Hauser L."/>
            <person name="Kyrpides N."/>
            <person name="Mikhailova N."/>
            <person name="Richardson P."/>
        </authorList>
    </citation>
    <scope>NUCLEOTIDE SEQUENCE [LARGE SCALE GENOMIC DNA]</scope>
    <source>
        <strain>NCIMB 400</strain>
    </source>
</reference>
<proteinExistence type="inferred from homology"/>
<organism>
    <name type="scientific">Shewanella frigidimarina (strain NCIMB 400)</name>
    <dbReference type="NCBI Taxonomy" id="318167"/>
    <lineage>
        <taxon>Bacteria</taxon>
        <taxon>Pseudomonadati</taxon>
        <taxon>Pseudomonadota</taxon>
        <taxon>Gammaproteobacteria</taxon>
        <taxon>Alteromonadales</taxon>
        <taxon>Shewanellaceae</taxon>
        <taxon>Shewanella</taxon>
    </lineage>
</organism>
<keyword id="KW-0028">Amino-acid biosynthesis</keyword>
<keyword id="KW-0057">Aromatic amino acid biosynthesis</keyword>
<keyword id="KW-0274">FAD</keyword>
<keyword id="KW-0285">Flavoprotein</keyword>
<keyword id="KW-0288">FMN</keyword>
<keyword id="KW-0456">Lyase</keyword>
<keyword id="KW-0521">NADP</keyword>
<keyword id="KW-1185">Reference proteome</keyword>
<sequence length="364" mass="38864">MSGNSIGQNFVVTTFGESHGVALGCIIDGCPPGLELTVEDMQHDLDRRRPGTSRYTTARREADEVRILSGVFEGKTTGTSIGLLIENTDQRSQDYSDIKDTFRPGHADYTYQQKYGMRDYRGGGRSSARETAMRVAAGAVAKKYLKQVHGIEIHGYLAQLGPISADTIDLTQIEQNAFFFPDASKLEALDEYMRGLRKSGDSIGAKITVAATGVPVGLGEPVFDRLDADIAHALMGINAVKGVEIGDGFGVVTQKGSQGRDLMSPQGFASNHAGGVLGGISSGQPVVAHIALKPTSSISVPGQSMTVQGETIDMITKGRHDPCVGIRAVPIAEAMLAIVLMDHLLRHRAQNQDVTSQTPVIGMR</sequence>
<name>AROC_SHEFN</name>
<accession>Q07ZQ7</accession>
<evidence type="ECO:0000255" key="1">
    <source>
        <dbReference type="HAMAP-Rule" id="MF_00300"/>
    </source>
</evidence>
<dbReference type="EC" id="4.2.3.5" evidence="1"/>
<dbReference type="EMBL" id="CP000447">
    <property type="protein sequence ID" value="ABI72508.1"/>
    <property type="molecule type" value="Genomic_DNA"/>
</dbReference>
<dbReference type="RefSeq" id="WP_011638116.1">
    <property type="nucleotide sequence ID" value="NC_008345.1"/>
</dbReference>
<dbReference type="SMR" id="Q07ZQ7"/>
<dbReference type="STRING" id="318167.Sfri_2667"/>
<dbReference type="KEGG" id="sfr:Sfri_2667"/>
<dbReference type="eggNOG" id="COG0082">
    <property type="taxonomic scope" value="Bacteria"/>
</dbReference>
<dbReference type="HOGENOM" id="CLU_034547_0_2_6"/>
<dbReference type="OrthoDB" id="9771806at2"/>
<dbReference type="UniPathway" id="UPA00053">
    <property type="reaction ID" value="UER00090"/>
</dbReference>
<dbReference type="Proteomes" id="UP000000684">
    <property type="component" value="Chromosome"/>
</dbReference>
<dbReference type="GO" id="GO:0005829">
    <property type="term" value="C:cytosol"/>
    <property type="evidence" value="ECO:0007669"/>
    <property type="project" value="TreeGrafter"/>
</dbReference>
<dbReference type="GO" id="GO:0004107">
    <property type="term" value="F:chorismate synthase activity"/>
    <property type="evidence" value="ECO:0007669"/>
    <property type="project" value="UniProtKB-UniRule"/>
</dbReference>
<dbReference type="GO" id="GO:0010181">
    <property type="term" value="F:FMN binding"/>
    <property type="evidence" value="ECO:0007669"/>
    <property type="project" value="TreeGrafter"/>
</dbReference>
<dbReference type="GO" id="GO:0008652">
    <property type="term" value="P:amino acid biosynthetic process"/>
    <property type="evidence" value="ECO:0007669"/>
    <property type="project" value="UniProtKB-KW"/>
</dbReference>
<dbReference type="GO" id="GO:0009073">
    <property type="term" value="P:aromatic amino acid family biosynthetic process"/>
    <property type="evidence" value="ECO:0007669"/>
    <property type="project" value="UniProtKB-KW"/>
</dbReference>
<dbReference type="GO" id="GO:0009423">
    <property type="term" value="P:chorismate biosynthetic process"/>
    <property type="evidence" value="ECO:0007669"/>
    <property type="project" value="UniProtKB-UniRule"/>
</dbReference>
<dbReference type="CDD" id="cd07304">
    <property type="entry name" value="Chorismate_synthase"/>
    <property type="match status" value="1"/>
</dbReference>
<dbReference type="FunFam" id="3.60.150.10:FF:000001">
    <property type="entry name" value="Chorismate synthase"/>
    <property type="match status" value="1"/>
</dbReference>
<dbReference type="Gene3D" id="3.60.150.10">
    <property type="entry name" value="Chorismate synthase AroC"/>
    <property type="match status" value="1"/>
</dbReference>
<dbReference type="HAMAP" id="MF_00300">
    <property type="entry name" value="Chorismate_synth"/>
    <property type="match status" value="1"/>
</dbReference>
<dbReference type="InterPro" id="IPR000453">
    <property type="entry name" value="Chorismate_synth"/>
</dbReference>
<dbReference type="InterPro" id="IPR035904">
    <property type="entry name" value="Chorismate_synth_AroC_sf"/>
</dbReference>
<dbReference type="InterPro" id="IPR020541">
    <property type="entry name" value="Chorismate_synthase_CS"/>
</dbReference>
<dbReference type="NCBIfam" id="TIGR00033">
    <property type="entry name" value="aroC"/>
    <property type="match status" value="1"/>
</dbReference>
<dbReference type="NCBIfam" id="NF003793">
    <property type="entry name" value="PRK05382.1"/>
    <property type="match status" value="1"/>
</dbReference>
<dbReference type="PANTHER" id="PTHR21085">
    <property type="entry name" value="CHORISMATE SYNTHASE"/>
    <property type="match status" value="1"/>
</dbReference>
<dbReference type="PANTHER" id="PTHR21085:SF0">
    <property type="entry name" value="CHORISMATE SYNTHASE"/>
    <property type="match status" value="1"/>
</dbReference>
<dbReference type="Pfam" id="PF01264">
    <property type="entry name" value="Chorismate_synt"/>
    <property type="match status" value="1"/>
</dbReference>
<dbReference type="PIRSF" id="PIRSF001456">
    <property type="entry name" value="Chorismate_synth"/>
    <property type="match status" value="1"/>
</dbReference>
<dbReference type="SUPFAM" id="SSF103263">
    <property type="entry name" value="Chorismate synthase, AroC"/>
    <property type="match status" value="1"/>
</dbReference>
<dbReference type="PROSITE" id="PS00787">
    <property type="entry name" value="CHORISMATE_SYNTHASE_1"/>
    <property type="match status" value="1"/>
</dbReference>
<dbReference type="PROSITE" id="PS00788">
    <property type="entry name" value="CHORISMATE_SYNTHASE_2"/>
    <property type="match status" value="1"/>
</dbReference>
<dbReference type="PROSITE" id="PS00789">
    <property type="entry name" value="CHORISMATE_SYNTHASE_3"/>
    <property type="match status" value="1"/>
</dbReference>
<feature type="chain" id="PRO_1000022548" description="Chorismate synthase">
    <location>
        <begin position="1"/>
        <end position="364"/>
    </location>
</feature>
<feature type="binding site" evidence="1">
    <location>
        <position position="48"/>
    </location>
    <ligand>
        <name>NADP(+)</name>
        <dbReference type="ChEBI" id="CHEBI:58349"/>
    </ligand>
</feature>
<feature type="binding site" evidence="1">
    <location>
        <position position="54"/>
    </location>
    <ligand>
        <name>NADP(+)</name>
        <dbReference type="ChEBI" id="CHEBI:58349"/>
    </ligand>
</feature>
<feature type="binding site" evidence="1">
    <location>
        <begin position="125"/>
        <end position="127"/>
    </location>
    <ligand>
        <name>FMN</name>
        <dbReference type="ChEBI" id="CHEBI:58210"/>
    </ligand>
</feature>
<feature type="binding site" evidence="1">
    <location>
        <begin position="238"/>
        <end position="239"/>
    </location>
    <ligand>
        <name>FMN</name>
        <dbReference type="ChEBI" id="CHEBI:58210"/>
    </ligand>
</feature>
<feature type="binding site" evidence="1">
    <location>
        <position position="278"/>
    </location>
    <ligand>
        <name>FMN</name>
        <dbReference type="ChEBI" id="CHEBI:58210"/>
    </ligand>
</feature>
<feature type="binding site" evidence="1">
    <location>
        <begin position="293"/>
        <end position="297"/>
    </location>
    <ligand>
        <name>FMN</name>
        <dbReference type="ChEBI" id="CHEBI:58210"/>
    </ligand>
</feature>
<feature type="binding site" evidence="1">
    <location>
        <position position="319"/>
    </location>
    <ligand>
        <name>FMN</name>
        <dbReference type="ChEBI" id="CHEBI:58210"/>
    </ligand>
</feature>
<gene>
    <name evidence="1" type="primary">aroC</name>
    <name type="ordered locus">Sfri_2667</name>
</gene>
<protein>
    <recommendedName>
        <fullName evidence="1">Chorismate synthase</fullName>
        <shortName evidence="1">CS</shortName>
        <ecNumber evidence="1">4.2.3.5</ecNumber>
    </recommendedName>
    <alternativeName>
        <fullName evidence="1">5-enolpyruvylshikimate-3-phosphate phospholyase</fullName>
    </alternativeName>
</protein>
<comment type="function">
    <text evidence="1">Catalyzes the anti-1,4-elimination of the C-3 phosphate and the C-6 proR hydrogen from 5-enolpyruvylshikimate-3-phosphate (EPSP) to yield chorismate, which is the branch point compound that serves as the starting substrate for the three terminal pathways of aromatic amino acid biosynthesis. This reaction introduces a second double bond into the aromatic ring system.</text>
</comment>
<comment type="catalytic activity">
    <reaction evidence="1">
        <text>5-O-(1-carboxyvinyl)-3-phosphoshikimate = chorismate + phosphate</text>
        <dbReference type="Rhea" id="RHEA:21020"/>
        <dbReference type="ChEBI" id="CHEBI:29748"/>
        <dbReference type="ChEBI" id="CHEBI:43474"/>
        <dbReference type="ChEBI" id="CHEBI:57701"/>
        <dbReference type="EC" id="4.2.3.5"/>
    </reaction>
</comment>
<comment type="cofactor">
    <cofactor evidence="1">
        <name>FMNH2</name>
        <dbReference type="ChEBI" id="CHEBI:57618"/>
    </cofactor>
    <text evidence="1">Reduced FMN (FMNH(2)).</text>
</comment>
<comment type="pathway">
    <text evidence="1">Metabolic intermediate biosynthesis; chorismate biosynthesis; chorismate from D-erythrose 4-phosphate and phosphoenolpyruvate: step 7/7.</text>
</comment>
<comment type="subunit">
    <text evidence="1">Homotetramer.</text>
</comment>
<comment type="similarity">
    <text evidence="1">Belongs to the chorismate synthase family.</text>
</comment>